<keyword id="KW-0963">Cytoplasm</keyword>
<keyword id="KW-0690">Ribosome biogenesis</keyword>
<sequence>MGESIMEQVEAIIAPVITEQGLELVDVEYVKEGAHWYLRIYIDKEGGVDIDDCTNVSHLVSEVLDKHDPIAQAYMLEVSSPGLERPLKKDEDFERFTGKLVRVLTKEVYQGYKEFTGYLVGLIEDDIVLEYEKERMAIPRAIVDKANLTFEF</sequence>
<feature type="chain" id="PRO_1000149792" description="Ribosome maturation factor RimP">
    <location>
        <begin position="1"/>
        <end position="152"/>
    </location>
</feature>
<protein>
    <recommendedName>
        <fullName evidence="1">Ribosome maturation factor RimP</fullName>
    </recommendedName>
</protein>
<proteinExistence type="inferred from homology"/>
<comment type="function">
    <text evidence="1">Required for maturation of 30S ribosomal subunits.</text>
</comment>
<comment type="subcellular location">
    <subcellularLocation>
        <location evidence="1">Cytoplasm</location>
    </subcellularLocation>
</comment>
<comment type="similarity">
    <text evidence="1">Belongs to the RimP family.</text>
</comment>
<name>RIMP_DESHD</name>
<evidence type="ECO:0000255" key="1">
    <source>
        <dbReference type="HAMAP-Rule" id="MF_01077"/>
    </source>
</evidence>
<accession>B8FR10</accession>
<gene>
    <name evidence="1" type="primary">rimP</name>
    <name type="ordered locus">Dhaf_3680</name>
</gene>
<organism>
    <name type="scientific">Desulfitobacterium hafniense (strain DSM 10664 / DCB-2)</name>
    <dbReference type="NCBI Taxonomy" id="272564"/>
    <lineage>
        <taxon>Bacteria</taxon>
        <taxon>Bacillati</taxon>
        <taxon>Bacillota</taxon>
        <taxon>Clostridia</taxon>
        <taxon>Eubacteriales</taxon>
        <taxon>Desulfitobacteriaceae</taxon>
        <taxon>Desulfitobacterium</taxon>
    </lineage>
</organism>
<dbReference type="EMBL" id="CP001336">
    <property type="protein sequence ID" value="ACL21697.1"/>
    <property type="molecule type" value="Genomic_DNA"/>
</dbReference>
<dbReference type="RefSeq" id="WP_015944718.1">
    <property type="nucleotide sequence ID" value="NC_011830.1"/>
</dbReference>
<dbReference type="SMR" id="B8FR10"/>
<dbReference type="KEGG" id="dhd:Dhaf_3680"/>
<dbReference type="HOGENOM" id="CLU_070525_2_0_9"/>
<dbReference type="Proteomes" id="UP000007726">
    <property type="component" value="Chromosome"/>
</dbReference>
<dbReference type="GO" id="GO:0005829">
    <property type="term" value="C:cytosol"/>
    <property type="evidence" value="ECO:0007669"/>
    <property type="project" value="TreeGrafter"/>
</dbReference>
<dbReference type="GO" id="GO:0000028">
    <property type="term" value="P:ribosomal small subunit assembly"/>
    <property type="evidence" value="ECO:0007669"/>
    <property type="project" value="TreeGrafter"/>
</dbReference>
<dbReference type="GO" id="GO:0006412">
    <property type="term" value="P:translation"/>
    <property type="evidence" value="ECO:0007669"/>
    <property type="project" value="TreeGrafter"/>
</dbReference>
<dbReference type="CDD" id="cd01734">
    <property type="entry name" value="YlxS_C"/>
    <property type="match status" value="1"/>
</dbReference>
<dbReference type="FunFam" id="3.30.300.70:FF:000001">
    <property type="entry name" value="Ribosome maturation factor RimP"/>
    <property type="match status" value="1"/>
</dbReference>
<dbReference type="Gene3D" id="2.30.30.180">
    <property type="entry name" value="Ribosome maturation factor RimP, C-terminal domain"/>
    <property type="match status" value="1"/>
</dbReference>
<dbReference type="Gene3D" id="3.30.300.70">
    <property type="entry name" value="RimP-like superfamily, N-terminal"/>
    <property type="match status" value="1"/>
</dbReference>
<dbReference type="HAMAP" id="MF_01077">
    <property type="entry name" value="RimP"/>
    <property type="match status" value="1"/>
</dbReference>
<dbReference type="InterPro" id="IPR003728">
    <property type="entry name" value="Ribosome_maturation_RimP"/>
</dbReference>
<dbReference type="InterPro" id="IPR028998">
    <property type="entry name" value="RimP_C"/>
</dbReference>
<dbReference type="InterPro" id="IPR036847">
    <property type="entry name" value="RimP_C_sf"/>
</dbReference>
<dbReference type="InterPro" id="IPR028989">
    <property type="entry name" value="RimP_N"/>
</dbReference>
<dbReference type="InterPro" id="IPR035956">
    <property type="entry name" value="RimP_N_sf"/>
</dbReference>
<dbReference type="NCBIfam" id="NF000928">
    <property type="entry name" value="PRK00092.1-2"/>
    <property type="match status" value="1"/>
</dbReference>
<dbReference type="PANTHER" id="PTHR33867">
    <property type="entry name" value="RIBOSOME MATURATION FACTOR RIMP"/>
    <property type="match status" value="1"/>
</dbReference>
<dbReference type="PANTHER" id="PTHR33867:SF1">
    <property type="entry name" value="RIBOSOME MATURATION FACTOR RIMP"/>
    <property type="match status" value="1"/>
</dbReference>
<dbReference type="Pfam" id="PF17384">
    <property type="entry name" value="DUF150_C"/>
    <property type="match status" value="1"/>
</dbReference>
<dbReference type="Pfam" id="PF02576">
    <property type="entry name" value="RimP_N"/>
    <property type="match status" value="1"/>
</dbReference>
<dbReference type="SUPFAM" id="SSF74942">
    <property type="entry name" value="YhbC-like, C-terminal domain"/>
    <property type="match status" value="1"/>
</dbReference>
<dbReference type="SUPFAM" id="SSF75420">
    <property type="entry name" value="YhbC-like, N-terminal domain"/>
    <property type="match status" value="1"/>
</dbReference>
<reference key="1">
    <citation type="journal article" date="2012" name="BMC Microbiol.">
        <title>Genome sequence of Desulfitobacterium hafniense DCB-2, a Gram-positive anaerobe capable of dehalogenation and metal reduction.</title>
        <authorList>
            <person name="Kim S.H."/>
            <person name="Harzman C."/>
            <person name="Davis J.K."/>
            <person name="Hutcheson R."/>
            <person name="Broderick J.B."/>
            <person name="Marsh T.L."/>
            <person name="Tiedje J.M."/>
        </authorList>
    </citation>
    <scope>NUCLEOTIDE SEQUENCE [LARGE SCALE GENOMIC DNA]</scope>
    <source>
        <strain>DSM 10664 / DCB-2</strain>
    </source>
</reference>